<dbReference type="EMBL" id="AK158193">
    <property type="protein sequence ID" value="BAE34401.1"/>
    <property type="molecule type" value="mRNA"/>
</dbReference>
<dbReference type="EMBL" id="AC151835">
    <property type="status" value="NOT_ANNOTATED_CDS"/>
    <property type="molecule type" value="Genomic_DNA"/>
</dbReference>
<dbReference type="EMBL" id="AC114000">
    <property type="status" value="NOT_ANNOTATED_CDS"/>
    <property type="molecule type" value="Genomic_DNA"/>
</dbReference>
<dbReference type="EMBL" id="AK220313">
    <property type="protein sequence ID" value="BAD90389.1"/>
    <property type="molecule type" value="mRNA"/>
</dbReference>
<dbReference type="RefSeq" id="NP_001028444.1">
    <property type="nucleotide sequence ID" value="NM_001033272.2"/>
</dbReference>
<dbReference type="RefSeq" id="NP_001297523.1">
    <property type="nucleotide sequence ID" value="NM_001310594.1"/>
</dbReference>
<dbReference type="SMR" id="Q5DU57"/>
<dbReference type="BioGRID" id="230117">
    <property type="interactions" value="2"/>
</dbReference>
<dbReference type="FunCoup" id="Q5DU57">
    <property type="interactions" value="93"/>
</dbReference>
<dbReference type="IntAct" id="Q5DU57">
    <property type="interactions" value="2"/>
</dbReference>
<dbReference type="STRING" id="10090.ENSMUSP00000022566"/>
<dbReference type="iPTMnet" id="Q5DU57"/>
<dbReference type="PhosphoSitePlus" id="Q5DU57"/>
<dbReference type="PaxDb" id="10090-ENSMUSP00000022566"/>
<dbReference type="PeptideAtlas" id="Q5DU57"/>
<dbReference type="ProteomicsDB" id="254542">
    <molecule id="Q5DU57-1"/>
</dbReference>
<dbReference type="ProteomicsDB" id="254543">
    <molecule id="Q5DU57-2"/>
</dbReference>
<dbReference type="GeneID" id="219140"/>
<dbReference type="KEGG" id="mmu:219140"/>
<dbReference type="UCSC" id="uc007ufe.2">
    <molecule id="Q5DU57-1"/>
    <property type="organism name" value="mouse"/>
</dbReference>
<dbReference type="AGR" id="MGI:104838"/>
<dbReference type="CTD" id="221178"/>
<dbReference type="MGI" id="MGI:104838">
    <property type="gene designation" value="Spata13"/>
</dbReference>
<dbReference type="eggNOG" id="KOG3519">
    <property type="taxonomic scope" value="Eukaryota"/>
</dbReference>
<dbReference type="InParanoid" id="Q5DU57"/>
<dbReference type="OrthoDB" id="660555at2759"/>
<dbReference type="PhylomeDB" id="Q5DU57"/>
<dbReference type="Reactome" id="R-MMU-9013148">
    <property type="pathway name" value="CDC42 GTPase cycle"/>
</dbReference>
<dbReference type="Reactome" id="R-MMU-9013149">
    <property type="pathway name" value="RAC1 GTPase cycle"/>
</dbReference>
<dbReference type="BioGRID-ORCS" id="219140">
    <property type="hits" value="1 hit in 75 CRISPR screens"/>
</dbReference>
<dbReference type="ChiTaRS" id="Spata13">
    <property type="organism name" value="mouse"/>
</dbReference>
<dbReference type="PRO" id="PR:Q5DU57"/>
<dbReference type="Proteomes" id="UP000000589">
    <property type="component" value="Unplaced"/>
</dbReference>
<dbReference type="RNAct" id="Q5DU57">
    <property type="molecule type" value="protein"/>
</dbReference>
<dbReference type="GO" id="GO:0070161">
    <property type="term" value="C:anchoring junction"/>
    <property type="evidence" value="ECO:0007669"/>
    <property type="project" value="UniProtKB-KW"/>
</dbReference>
<dbReference type="GO" id="GO:0005737">
    <property type="term" value="C:cytoplasm"/>
    <property type="evidence" value="ECO:0000250"/>
    <property type="project" value="UniProtKB"/>
</dbReference>
<dbReference type="GO" id="GO:0030175">
    <property type="term" value="C:filopodium"/>
    <property type="evidence" value="ECO:0000250"/>
    <property type="project" value="UniProtKB"/>
</dbReference>
<dbReference type="GO" id="GO:0030027">
    <property type="term" value="C:lamellipodium"/>
    <property type="evidence" value="ECO:0000250"/>
    <property type="project" value="UniProtKB"/>
</dbReference>
<dbReference type="GO" id="GO:0002102">
    <property type="term" value="C:podosome"/>
    <property type="evidence" value="ECO:0000314"/>
    <property type="project" value="UniProtKB"/>
</dbReference>
<dbReference type="GO" id="GO:0032587">
    <property type="term" value="C:ruffle membrane"/>
    <property type="evidence" value="ECO:0000250"/>
    <property type="project" value="UniProtKB"/>
</dbReference>
<dbReference type="GO" id="GO:0005085">
    <property type="term" value="F:guanyl-nucleotide exchange factor activity"/>
    <property type="evidence" value="ECO:0000250"/>
    <property type="project" value="UniProtKB"/>
</dbReference>
<dbReference type="GO" id="GO:0016477">
    <property type="term" value="P:cell migration"/>
    <property type="evidence" value="ECO:0000250"/>
    <property type="project" value="UniProtKB"/>
</dbReference>
<dbReference type="GO" id="GO:0046847">
    <property type="term" value="P:filopodium assembly"/>
    <property type="evidence" value="ECO:0000250"/>
    <property type="project" value="UniProtKB"/>
</dbReference>
<dbReference type="GO" id="GO:0035556">
    <property type="term" value="P:intracellular signal transduction"/>
    <property type="evidence" value="ECO:0007669"/>
    <property type="project" value="InterPro"/>
</dbReference>
<dbReference type="GO" id="GO:0030032">
    <property type="term" value="P:lamellipodium assembly"/>
    <property type="evidence" value="ECO:0000250"/>
    <property type="project" value="UniProtKB"/>
</dbReference>
<dbReference type="GO" id="GO:0030334">
    <property type="term" value="P:regulation of cell migration"/>
    <property type="evidence" value="ECO:0000250"/>
    <property type="project" value="UniProtKB"/>
</dbReference>
<dbReference type="CDD" id="cd01224">
    <property type="entry name" value="PH_Collybistin_ASEF"/>
    <property type="match status" value="1"/>
</dbReference>
<dbReference type="CDD" id="cd00160">
    <property type="entry name" value="RhoGEF"/>
    <property type="match status" value="1"/>
</dbReference>
<dbReference type="CDD" id="cd11973">
    <property type="entry name" value="SH3_ASEF"/>
    <property type="match status" value="1"/>
</dbReference>
<dbReference type="FunFam" id="1.20.900.10:FF:000002">
    <property type="entry name" value="Rho guanine nucleotide exchange factor 9"/>
    <property type="match status" value="1"/>
</dbReference>
<dbReference type="FunFam" id="2.30.29.30:FF:000015">
    <property type="entry name" value="Rho guanine nucleotide exchange factor 9"/>
    <property type="match status" value="1"/>
</dbReference>
<dbReference type="FunFam" id="2.30.30.40:FF:000077">
    <property type="entry name" value="spermatogenesis-associated protein 13 isoform X2"/>
    <property type="match status" value="1"/>
</dbReference>
<dbReference type="Gene3D" id="1.20.900.10">
    <property type="entry name" value="Dbl homology (DH) domain"/>
    <property type="match status" value="1"/>
</dbReference>
<dbReference type="Gene3D" id="2.30.29.30">
    <property type="entry name" value="Pleckstrin-homology domain (PH domain)/Phosphotyrosine-binding domain (PTB)"/>
    <property type="match status" value="1"/>
</dbReference>
<dbReference type="Gene3D" id="2.30.30.40">
    <property type="entry name" value="SH3 Domains"/>
    <property type="match status" value="1"/>
</dbReference>
<dbReference type="InterPro" id="IPR035899">
    <property type="entry name" value="DBL_dom_sf"/>
</dbReference>
<dbReference type="InterPro" id="IPR000219">
    <property type="entry name" value="DH_dom"/>
</dbReference>
<dbReference type="InterPro" id="IPR001331">
    <property type="entry name" value="GDS_CDC24_CS"/>
</dbReference>
<dbReference type="InterPro" id="IPR011993">
    <property type="entry name" value="PH-like_dom_sf"/>
</dbReference>
<dbReference type="InterPro" id="IPR001849">
    <property type="entry name" value="PH_domain"/>
</dbReference>
<dbReference type="InterPro" id="IPR036028">
    <property type="entry name" value="SH3-like_dom_sf"/>
</dbReference>
<dbReference type="InterPro" id="IPR001452">
    <property type="entry name" value="SH3_domain"/>
</dbReference>
<dbReference type="InterPro" id="IPR055251">
    <property type="entry name" value="SOS1_NGEF_PH"/>
</dbReference>
<dbReference type="PANTHER" id="PTHR47544">
    <property type="entry name" value="RHO GUANINE NUCLEOTIDE EXCHANGE FACTOR 4"/>
    <property type="match status" value="1"/>
</dbReference>
<dbReference type="PANTHER" id="PTHR47544:SF5">
    <property type="entry name" value="SPERMATOGENESIS-ASSOCIATED 13"/>
    <property type="match status" value="1"/>
</dbReference>
<dbReference type="Pfam" id="PF00621">
    <property type="entry name" value="RhoGEF"/>
    <property type="match status" value="1"/>
</dbReference>
<dbReference type="Pfam" id="PF00018">
    <property type="entry name" value="SH3_1"/>
    <property type="match status" value="1"/>
</dbReference>
<dbReference type="Pfam" id="PF22697">
    <property type="entry name" value="SOS1_NGEF_PH"/>
    <property type="match status" value="1"/>
</dbReference>
<dbReference type="SMART" id="SM00233">
    <property type="entry name" value="PH"/>
    <property type="match status" value="1"/>
</dbReference>
<dbReference type="SMART" id="SM00325">
    <property type="entry name" value="RhoGEF"/>
    <property type="match status" value="1"/>
</dbReference>
<dbReference type="SMART" id="SM00326">
    <property type="entry name" value="SH3"/>
    <property type="match status" value="1"/>
</dbReference>
<dbReference type="SUPFAM" id="SSF48065">
    <property type="entry name" value="DBL homology domain (DH-domain)"/>
    <property type="match status" value="1"/>
</dbReference>
<dbReference type="SUPFAM" id="SSF50729">
    <property type="entry name" value="PH domain-like"/>
    <property type="match status" value="1"/>
</dbReference>
<dbReference type="SUPFAM" id="SSF50044">
    <property type="entry name" value="SH3-domain"/>
    <property type="match status" value="1"/>
</dbReference>
<dbReference type="PROSITE" id="PS00741">
    <property type="entry name" value="DH_1"/>
    <property type="match status" value="1"/>
</dbReference>
<dbReference type="PROSITE" id="PS50010">
    <property type="entry name" value="DH_2"/>
    <property type="match status" value="1"/>
</dbReference>
<dbReference type="PROSITE" id="PS50003">
    <property type="entry name" value="PH_DOMAIN"/>
    <property type="match status" value="1"/>
</dbReference>
<dbReference type="PROSITE" id="PS50002">
    <property type="entry name" value="SH3"/>
    <property type="match status" value="1"/>
</dbReference>
<name>SPT13_MOUSE</name>
<accession>Q5DU57</accession>
<accession>Q3TZ09</accession>
<proteinExistence type="evidence at protein level"/>
<keyword id="KW-0025">Alternative splicing</keyword>
<keyword id="KW-0965">Cell junction</keyword>
<keyword id="KW-1003">Cell membrane</keyword>
<keyword id="KW-0966">Cell projection</keyword>
<keyword id="KW-0963">Cytoplasm</keyword>
<keyword id="KW-0344">Guanine-nucleotide releasing factor</keyword>
<keyword id="KW-0472">Membrane</keyword>
<keyword id="KW-0597">Phosphoprotein</keyword>
<keyword id="KW-1185">Reference proteome</keyword>
<keyword id="KW-0728">SH3 domain</keyword>
<organism>
    <name type="scientific">Mus musculus</name>
    <name type="common">Mouse</name>
    <dbReference type="NCBI Taxonomy" id="10090"/>
    <lineage>
        <taxon>Eukaryota</taxon>
        <taxon>Metazoa</taxon>
        <taxon>Chordata</taxon>
        <taxon>Craniata</taxon>
        <taxon>Vertebrata</taxon>
        <taxon>Euteleostomi</taxon>
        <taxon>Mammalia</taxon>
        <taxon>Eutheria</taxon>
        <taxon>Euarchontoglires</taxon>
        <taxon>Glires</taxon>
        <taxon>Rodentia</taxon>
        <taxon>Myomorpha</taxon>
        <taxon>Muroidea</taxon>
        <taxon>Muridae</taxon>
        <taxon>Murinae</taxon>
        <taxon>Mus</taxon>
        <taxon>Mus</taxon>
    </lineage>
</organism>
<evidence type="ECO:0000250" key="1"/>
<evidence type="ECO:0000255" key="2">
    <source>
        <dbReference type="PROSITE-ProRule" id="PRU00062"/>
    </source>
</evidence>
<evidence type="ECO:0000255" key="3">
    <source>
        <dbReference type="PROSITE-ProRule" id="PRU00145"/>
    </source>
</evidence>
<evidence type="ECO:0000255" key="4">
    <source>
        <dbReference type="PROSITE-ProRule" id="PRU00192"/>
    </source>
</evidence>
<evidence type="ECO:0000256" key="5">
    <source>
        <dbReference type="SAM" id="MobiDB-lite"/>
    </source>
</evidence>
<evidence type="ECO:0000269" key="6">
    <source>
    </source>
</evidence>
<evidence type="ECO:0000269" key="7">
    <source>
    </source>
</evidence>
<evidence type="ECO:0000303" key="8">
    <source>
    </source>
</evidence>
<evidence type="ECO:0007744" key="9">
    <source>
    </source>
</evidence>
<feature type="chain" id="PRO_0000278449" description="Spermatogenesis-associated protein 13">
    <location>
        <begin position="1"/>
        <end position="656"/>
    </location>
</feature>
<feature type="domain" description="SH3" evidence="4">
    <location>
        <begin position="151"/>
        <end position="210"/>
    </location>
</feature>
<feature type="domain" description="DH" evidence="2">
    <location>
        <begin position="244"/>
        <end position="428"/>
    </location>
</feature>
<feature type="domain" description="PH" evidence="3">
    <location>
        <begin position="459"/>
        <end position="565"/>
    </location>
</feature>
<feature type="region of interest" description="Disordered" evidence="5">
    <location>
        <begin position="1"/>
        <end position="26"/>
    </location>
</feature>
<feature type="region of interest" description="Disordered" evidence="5">
    <location>
        <begin position="85"/>
        <end position="115"/>
    </location>
</feature>
<feature type="region of interest" description="ABR (APC-binding region) domain" evidence="1">
    <location>
        <begin position="102"/>
        <end position="154"/>
    </location>
</feature>
<feature type="region of interest" description="Disordered" evidence="5">
    <location>
        <begin position="215"/>
        <end position="242"/>
    </location>
</feature>
<feature type="region of interest" description="C-terminal tail" evidence="1">
    <location>
        <begin position="565"/>
        <end position="656"/>
    </location>
</feature>
<feature type="compositionally biased region" description="Polar residues" evidence="5">
    <location>
        <begin position="1"/>
        <end position="12"/>
    </location>
</feature>
<feature type="modified residue" description="Phosphoserine" evidence="9">
    <location>
        <position position="82"/>
    </location>
</feature>
<feature type="modified residue" description="Phosphoserine" evidence="9">
    <location>
        <position position="118"/>
    </location>
</feature>
<feature type="splice variant" id="VSP_023287" description="In isoform 2." evidence="8">
    <location>
        <begin position="1"/>
        <end position="352"/>
    </location>
</feature>
<reference key="1">
    <citation type="journal article" date="2005" name="Science">
        <title>The transcriptional landscape of the mammalian genome.</title>
        <authorList>
            <person name="Carninci P."/>
            <person name="Kasukawa T."/>
            <person name="Katayama S."/>
            <person name="Gough J."/>
            <person name="Frith M.C."/>
            <person name="Maeda N."/>
            <person name="Oyama R."/>
            <person name="Ravasi T."/>
            <person name="Lenhard B."/>
            <person name="Wells C."/>
            <person name="Kodzius R."/>
            <person name="Shimokawa K."/>
            <person name="Bajic V.B."/>
            <person name="Brenner S.E."/>
            <person name="Batalov S."/>
            <person name="Forrest A.R."/>
            <person name="Zavolan M."/>
            <person name="Davis M.J."/>
            <person name="Wilming L.G."/>
            <person name="Aidinis V."/>
            <person name="Allen J.E."/>
            <person name="Ambesi-Impiombato A."/>
            <person name="Apweiler R."/>
            <person name="Aturaliya R.N."/>
            <person name="Bailey T.L."/>
            <person name="Bansal M."/>
            <person name="Baxter L."/>
            <person name="Beisel K.W."/>
            <person name="Bersano T."/>
            <person name="Bono H."/>
            <person name="Chalk A.M."/>
            <person name="Chiu K.P."/>
            <person name="Choudhary V."/>
            <person name="Christoffels A."/>
            <person name="Clutterbuck D.R."/>
            <person name="Crowe M.L."/>
            <person name="Dalla E."/>
            <person name="Dalrymple B.P."/>
            <person name="de Bono B."/>
            <person name="Della Gatta G."/>
            <person name="di Bernardo D."/>
            <person name="Down T."/>
            <person name="Engstrom P."/>
            <person name="Fagiolini M."/>
            <person name="Faulkner G."/>
            <person name="Fletcher C.F."/>
            <person name="Fukushima T."/>
            <person name="Furuno M."/>
            <person name="Futaki S."/>
            <person name="Gariboldi M."/>
            <person name="Georgii-Hemming P."/>
            <person name="Gingeras T.R."/>
            <person name="Gojobori T."/>
            <person name="Green R.E."/>
            <person name="Gustincich S."/>
            <person name="Harbers M."/>
            <person name="Hayashi Y."/>
            <person name="Hensch T.K."/>
            <person name="Hirokawa N."/>
            <person name="Hill D."/>
            <person name="Huminiecki L."/>
            <person name="Iacono M."/>
            <person name="Ikeo K."/>
            <person name="Iwama A."/>
            <person name="Ishikawa T."/>
            <person name="Jakt M."/>
            <person name="Kanapin A."/>
            <person name="Katoh M."/>
            <person name="Kawasawa Y."/>
            <person name="Kelso J."/>
            <person name="Kitamura H."/>
            <person name="Kitano H."/>
            <person name="Kollias G."/>
            <person name="Krishnan S.P."/>
            <person name="Kruger A."/>
            <person name="Kummerfeld S.K."/>
            <person name="Kurochkin I.V."/>
            <person name="Lareau L.F."/>
            <person name="Lazarevic D."/>
            <person name="Lipovich L."/>
            <person name="Liu J."/>
            <person name="Liuni S."/>
            <person name="McWilliam S."/>
            <person name="Madan Babu M."/>
            <person name="Madera M."/>
            <person name="Marchionni L."/>
            <person name="Matsuda H."/>
            <person name="Matsuzawa S."/>
            <person name="Miki H."/>
            <person name="Mignone F."/>
            <person name="Miyake S."/>
            <person name="Morris K."/>
            <person name="Mottagui-Tabar S."/>
            <person name="Mulder N."/>
            <person name="Nakano N."/>
            <person name="Nakauchi H."/>
            <person name="Ng P."/>
            <person name="Nilsson R."/>
            <person name="Nishiguchi S."/>
            <person name="Nishikawa S."/>
            <person name="Nori F."/>
            <person name="Ohara O."/>
            <person name="Okazaki Y."/>
            <person name="Orlando V."/>
            <person name="Pang K.C."/>
            <person name="Pavan W.J."/>
            <person name="Pavesi G."/>
            <person name="Pesole G."/>
            <person name="Petrovsky N."/>
            <person name="Piazza S."/>
            <person name="Reed J."/>
            <person name="Reid J.F."/>
            <person name="Ring B.Z."/>
            <person name="Ringwald M."/>
            <person name="Rost B."/>
            <person name="Ruan Y."/>
            <person name="Salzberg S.L."/>
            <person name="Sandelin A."/>
            <person name="Schneider C."/>
            <person name="Schoenbach C."/>
            <person name="Sekiguchi K."/>
            <person name="Semple C.A."/>
            <person name="Seno S."/>
            <person name="Sessa L."/>
            <person name="Sheng Y."/>
            <person name="Shibata Y."/>
            <person name="Shimada H."/>
            <person name="Shimada K."/>
            <person name="Silva D."/>
            <person name="Sinclair B."/>
            <person name="Sperling S."/>
            <person name="Stupka E."/>
            <person name="Sugiura K."/>
            <person name="Sultana R."/>
            <person name="Takenaka Y."/>
            <person name="Taki K."/>
            <person name="Tammoja K."/>
            <person name="Tan S.L."/>
            <person name="Tang S."/>
            <person name="Taylor M.S."/>
            <person name="Tegner J."/>
            <person name="Teichmann S.A."/>
            <person name="Ueda H.R."/>
            <person name="van Nimwegen E."/>
            <person name="Verardo R."/>
            <person name="Wei C.L."/>
            <person name="Yagi K."/>
            <person name="Yamanishi H."/>
            <person name="Zabarovsky E."/>
            <person name="Zhu S."/>
            <person name="Zimmer A."/>
            <person name="Hide W."/>
            <person name="Bult C."/>
            <person name="Grimmond S.M."/>
            <person name="Teasdale R.D."/>
            <person name="Liu E.T."/>
            <person name="Brusic V."/>
            <person name="Quackenbush J."/>
            <person name="Wahlestedt C."/>
            <person name="Mattick J.S."/>
            <person name="Hume D.A."/>
            <person name="Kai C."/>
            <person name="Sasaki D."/>
            <person name="Tomaru Y."/>
            <person name="Fukuda S."/>
            <person name="Kanamori-Katayama M."/>
            <person name="Suzuki M."/>
            <person name="Aoki J."/>
            <person name="Arakawa T."/>
            <person name="Iida J."/>
            <person name="Imamura K."/>
            <person name="Itoh M."/>
            <person name="Kato T."/>
            <person name="Kawaji H."/>
            <person name="Kawagashira N."/>
            <person name="Kawashima T."/>
            <person name="Kojima M."/>
            <person name="Kondo S."/>
            <person name="Konno H."/>
            <person name="Nakano K."/>
            <person name="Ninomiya N."/>
            <person name="Nishio T."/>
            <person name="Okada M."/>
            <person name="Plessy C."/>
            <person name="Shibata K."/>
            <person name="Shiraki T."/>
            <person name="Suzuki S."/>
            <person name="Tagami M."/>
            <person name="Waki K."/>
            <person name="Watahiki A."/>
            <person name="Okamura-Oho Y."/>
            <person name="Suzuki H."/>
            <person name="Kawai J."/>
            <person name="Hayashizaki Y."/>
        </authorList>
    </citation>
    <scope>NUCLEOTIDE SEQUENCE [LARGE SCALE MRNA] (ISOFORM 2)</scope>
    <source>
        <strain>C57BL/6J</strain>
        <tissue>Inner ear</tissue>
    </source>
</reference>
<reference key="2">
    <citation type="journal article" date="2009" name="PLoS Biol.">
        <title>Lineage-specific biology revealed by a finished genome assembly of the mouse.</title>
        <authorList>
            <person name="Church D.M."/>
            <person name="Goodstadt L."/>
            <person name="Hillier L.W."/>
            <person name="Zody M.C."/>
            <person name="Goldstein S."/>
            <person name="She X."/>
            <person name="Bult C.J."/>
            <person name="Agarwala R."/>
            <person name="Cherry J.L."/>
            <person name="DiCuccio M."/>
            <person name="Hlavina W."/>
            <person name="Kapustin Y."/>
            <person name="Meric P."/>
            <person name="Maglott D."/>
            <person name="Birtle Z."/>
            <person name="Marques A.C."/>
            <person name="Graves T."/>
            <person name="Zhou S."/>
            <person name="Teague B."/>
            <person name="Potamousis K."/>
            <person name="Churas C."/>
            <person name="Place M."/>
            <person name="Herschleb J."/>
            <person name="Runnheim R."/>
            <person name="Forrest D."/>
            <person name="Amos-Landgraf J."/>
            <person name="Schwartz D.C."/>
            <person name="Cheng Z."/>
            <person name="Lindblad-Toh K."/>
            <person name="Eichler E.E."/>
            <person name="Ponting C.P."/>
        </authorList>
    </citation>
    <scope>NUCLEOTIDE SEQUENCE [LARGE SCALE GENOMIC DNA]</scope>
    <source>
        <strain>C57BL/6J</strain>
    </source>
</reference>
<reference key="3">
    <citation type="submission" date="2005-02" db="EMBL/GenBank/DDBJ databases">
        <title>Prediction of the coding sequences of mouse homologues of KIAA gene. The complete nucleotide sequences of mouse KIAA-homologous cDNAs identified by screening of terminal sequences of cDNA clones randomly sampled from size-fractionated libraries.</title>
        <authorList>
            <person name="Okazaki N."/>
            <person name="Kikuno R.F."/>
            <person name="Ohara R."/>
            <person name="Inamoto S."/>
            <person name="Nagase T."/>
            <person name="Ohara O."/>
            <person name="Koga H."/>
        </authorList>
    </citation>
    <scope>NUCLEOTIDE SEQUENCE [LARGE SCALE MRNA] OF 80-656 (ISOFORM 1)</scope>
    <source>
        <tissue>Fetal brain</tissue>
    </source>
</reference>
<reference key="4">
    <citation type="journal article" date="2009" name="EMBO Rep.">
        <title>The adenomatous polyposis coli-associated exchange factors Asef and Asef2 are required for adenoma formation in Apc(Min/+)mice.</title>
        <authorList>
            <person name="Kawasaki Y."/>
            <person name="Tsuji S."/>
            <person name="Muroya K."/>
            <person name="Furukawa S."/>
            <person name="Shibata Y."/>
            <person name="Okuno M."/>
            <person name="Ohwada S."/>
            <person name="Akiyama T."/>
        </authorList>
    </citation>
    <scope>FUNCTION</scope>
    <scope>TISSUE SPECIFICITY</scope>
</reference>
<reference key="5">
    <citation type="journal article" date="2010" name="Cell">
        <title>A tissue-specific atlas of mouse protein phosphorylation and expression.</title>
        <authorList>
            <person name="Huttlin E.L."/>
            <person name="Jedrychowski M.P."/>
            <person name="Elias J.E."/>
            <person name="Goswami T."/>
            <person name="Rad R."/>
            <person name="Beausoleil S.A."/>
            <person name="Villen J."/>
            <person name="Haas W."/>
            <person name="Sowa M.E."/>
            <person name="Gygi S.P."/>
        </authorList>
    </citation>
    <scope>PHOSPHORYLATION [LARGE SCALE ANALYSIS] AT SER-82 AND SER-118</scope>
    <scope>IDENTIFICATION BY MASS SPECTROMETRY [LARGE SCALE ANALYSIS]</scope>
    <source>
        <tissue>Brain</tissue>
        <tissue>Brown adipose tissue</tissue>
        <tissue>Kidney</tissue>
        <tissue>Lung</tissue>
        <tissue>Spleen</tissue>
    </source>
</reference>
<reference key="6">
    <citation type="journal article" date="2013" name="J. Cell Sci.">
        <title>Amotl2 interacts with LL5beta, localizes to podosomes and regulates postsynaptic differentiation in muscle.</title>
        <authorList>
            <person name="Proszynski T.J."/>
            <person name="Sanes J.R."/>
        </authorList>
    </citation>
    <scope>SUBCELLULAR LOCATION</scope>
</reference>
<comment type="function">
    <text evidence="1 6">Acts as a guanine nucleotide exchange factor (GEF) for RHOA, RAC1 and CDC42 GTPases. Regulates cell migration and adhesion assembly and disassembly through a RAC1, PI3K, RHOA and AKT1-dependent mechanism. Increases both RAC1 and CDC42 activity, but decreases the amount of active RHOA (By similarity). Required for MMP9 up-regulation via the JNK signaling pathway in colorectal tumor cells. Involved in tumor angiogenesis and may play a role in intestinal adenoma formation and tumor progression.</text>
</comment>
<comment type="activity regulation">
    <text evidence="1">Both the ABR and the SH3 domains contribute to maintaining the protein in an inhibited conformation by associating with the C-terminal tail. Binding of these domains to the C-terminal tail inhibits the activity of the protein by blocking a region that is required for its GEF activity (By similarity).</text>
</comment>
<comment type="subunit">
    <text evidence="1">Interacts (via ABR and SH3 domain) with APC. The binding of APC enhances its GEF activity by relieving it from an autoinhibitory conformation, in which the ABR and SH3 domains are associated with the C-terminal tail. Interacts (via C-terminal tail) with PPP1R9B (via C-terminus). Interacts with RAC1 (By similarity).</text>
</comment>
<comment type="subcellular location">
    <subcellularLocation>
        <location evidence="1">Cytoplasm</location>
    </subcellularLocation>
    <subcellularLocation>
        <location evidence="1">Cell projection</location>
        <location evidence="1">Filopodium</location>
    </subcellularLocation>
    <subcellularLocation>
        <location evidence="1">Cell projection</location>
        <location evidence="1">Lamellipodium</location>
    </subcellularLocation>
    <subcellularLocation>
        <location evidence="1">Cell projection</location>
        <location evidence="1">Ruffle membrane</location>
    </subcellularLocation>
    <subcellularLocation>
        <location evidence="7">Cell projection</location>
        <location evidence="7">Podosome</location>
    </subcellularLocation>
    <text evidence="1 7">Accumulates in the lamellipodium and ruffle membrane in response to hepatocyte growth factor (HGF) treatment. Localized to the core of myotube podosomes (PubMed:23525008).</text>
</comment>
<comment type="alternative products">
    <event type="alternative splicing"/>
    <isoform>
        <id>Q5DU57-1</id>
        <name>1</name>
        <sequence type="displayed"/>
    </isoform>
    <isoform>
        <id>Q5DU57-2</id>
        <name>2</name>
        <sequence type="described" ref="VSP_023287"/>
    </isoform>
</comment>
<comment type="tissue specificity">
    <text evidence="6">Expression is aberrantly enhanced in most colorectal tumors.</text>
</comment>
<comment type="domain">
    <text evidence="1">The C-terminal tail is required for its GEF activity.</text>
</comment>
<protein>
    <recommendedName>
        <fullName>Spermatogenesis-associated protein 13</fullName>
    </recommendedName>
    <alternativeName>
        <fullName>APC-stimulated guanine nucleotide exchange factor 2</fullName>
        <shortName>Asef2</shortName>
    </alternativeName>
</protein>
<gene>
    <name type="primary">Spata13</name>
</gene>
<sequence length="656" mass="75257">MHPASVTTTSQDPCAPSGSCRGGRRRRPISVIGGVSFYGNTQVEDVENLLVQPAARPPVPAHQVPPYKAVSARLRPFTFSQSTPIGLDRVGRRRQMKTSNVSSDGGAESSALVDDNGSEEDFSYEELCQANPRYLQPGGEQLAINELISDGSVVCAEALWDHVTMDDQELGFKAGDVIQVLEASNKDWWWGRNEDKEAWFPASFVRLRVNQEELPENCSSSHGEEQDEDTSKARHKHPESQQQMRTNVIQEIMNTERVYIKHLKDICEGYIRQCRKHTGMFTVAQLATIFGNIEDIYKFQRKFLKDLEKQYNKEEPHLSEIGSCFLEHQEGFAIYSEYCNNHPGACVELSNLMKHSKYRHFFEACRLLQQMIDIALDGFLLTPVQKICKYPLQLAELLKYTTQEHGDYNNIKAAYEAMKNVACLINERKRKLESIDKIARWQVSIVGWEGLDILDRSSELIHSGELTKITRQGKSQQRIFFLFDHQLVSCKKDLLRRDMLYYKGRMDMDEVELVDVEDGRDKDWSLSLRNAFKLVSKATDEVHLFCARKQEDKARWLQAYADERRRVQEDQQMGMEIPENQKKLAMLNAQKAGHGKSKGYNSCPVAPPHQSLPPLHQRHITVPTSIPQQQVFALAEPKRKPSIFWHTFHKLTPFRK</sequence>